<sequence length="130" mass="14398">MAMVSEFLKQAWFMDNQEQECIKSSKGGSSVQSRPNFDPSADVSALDKAITVKGVDEATIIDILTKRTNAQRQQIKAAYQQAKGKSLEEDLKKVLKSHLEDVVVALLKTPAQFDAEELRASMKGLGTDRR</sequence>
<comment type="function">
    <text evidence="2 4 5">Plays important roles in the innate immune response as effector of glucocorticoid-mediated responses and regulator of the inflammatory process. Has anti-inflammatory activity. Plays a role in glucocorticoid-mediated down-regulation of the early phase of the inflammatory response. Promotes resolution of inflammation and wound healing (By similarity). Functions at least in part by activating the formyl peptide receptors and downstream signaling cascades. Promotes chemotaxis of granulocytes and monocytes via activation of the formyl peptide receptors (By similarity). Contributes to the adaptive immune response by enhancing signaling cascades that are triggered by T-cell activation, regulates differentiation and proliferation of activated T-cells. Promotes the differentiation of T-cells into Th1 cells and negatively regulates differentiation into Th2 cells (By similarity). Has no effect on unstimulated T-cells. Promotes rearrangement of the actin cytoskeleton, cell polarization and cell migration. Negatively regulates hormone exocytosis via activation of the formyl peptide receptors and reorganization of the actin cytoskeleton (By similarity). Has high affinity for Ca(2+) and can bind up to eight Ca(2+) ions (By similarity). Displays Ca(2+)-dependent binding to phospholipid membranes (By similarity). Plays a role in the formation of phagocytic cups and phagosomes. Plays a role in phagocytosis by mediating the Ca(2+)-dependent interaction between phagosomes and the actin cytoskeleton (By similarity).</text>
</comment>
<comment type="subcellular location">
    <subcellularLocation>
        <location evidence="3">Nucleus</location>
    </subcellularLocation>
    <subcellularLocation>
        <location evidence="4">Cytoplasm</location>
    </subcellularLocation>
    <subcellularLocation>
        <location evidence="4">Cell projection</location>
        <location evidence="4">Cilium</location>
    </subcellularLocation>
    <subcellularLocation>
        <location evidence="6">Basolateral cell membrane</location>
    </subcellularLocation>
    <subcellularLocation>
        <location evidence="4">Lateral cell membrane</location>
    </subcellularLocation>
    <subcellularLocation>
        <location evidence="4">Cell membrane</location>
        <topology evidence="4">Peripheral membrane protein</topology>
    </subcellularLocation>
    <subcellularLocation>
        <location evidence="4">Apical cell membrane</location>
    </subcellularLocation>
    <subcellularLocation>
        <location evidence="4">Membrane</location>
        <topology evidence="4">Peripheral membrane protein</topology>
    </subcellularLocation>
    <subcellularLocation>
        <location evidence="5">Early endosome</location>
    </subcellularLocation>
    <subcellularLocation>
        <location evidence="5">Cytoplasmic vesicle membrane</location>
        <topology evidence="5">Peripheral membrane protein</topology>
    </subcellularLocation>
    <subcellularLocation>
        <location evidence="3">Endosome membrane</location>
        <topology evidence="3">Peripheral membrane protein</topology>
    </subcellularLocation>
    <subcellularLocation>
        <location evidence="4">Secreted</location>
    </subcellularLocation>
    <subcellularLocation>
        <location evidence="2">Secreted</location>
        <location evidence="2">Extracellular space</location>
    </subcellularLocation>
    <subcellularLocation>
        <location evidence="2">Cell membrane</location>
        <topology evidence="2">Peripheral membrane protein</topology>
        <orientation evidence="2">Extracellular side</orientation>
    </subcellularLocation>
    <subcellularLocation>
        <location evidence="4">Secreted</location>
        <location evidence="4">Extracellular exosome</location>
    </subcellularLocation>
    <subcellularLocation>
        <location evidence="4">Cytoplasmic vesicle</location>
        <location evidence="4">Secretory vesicle lumen</location>
    </subcellularLocation>
    <subcellularLocation>
        <location evidence="4">Cell projection</location>
        <location evidence="4">Phagocytic cup</location>
    </subcellularLocation>
    <text evidence="2 4">Colocalizes with actin fibers at phagocytic cups. Secreted, at least in part via exosomes and other secretory vesicles. Detected in exosomes and other extracellular vesicles. Secretion is increased in response to wounding and inflammation (By similarity). Alternatively, the secretion is dependent on protein unfolding and facilitated by the cargo receptor TMED10; it results in the protein translocation from the cytoplasm into ERGIC (endoplasmic reticulum-Golgi intermediate compartment) followed by vesicle entry and secretion (By similarity). Detected in gelatinase granules in resting neutrophils. Neutrophil adhesion to endothelial cells stimulates secretion via gelatinase granules, but foreign particle phagocytosis has no effect. Displays calcium-dependent binding to phospholipid membranes (By similarity).</text>
</comment>
<comment type="domain">
    <text evidence="5">The full-length protein can bind eight Ca(2+) ions via the annexin repeats. Calcium binding causes a major conformation change that modifies dimer contacts and leads to surface exposure of the N-terminal phosphorylation sites; in the absence of Ca(2+), these sites are buried in the interior of the protein core. The N-terminal region becomes disordered in response to calcium-binding.</text>
</comment>
<comment type="domain">
    <text evidence="2">The N-terminal 26 amino acids are sufficient for its extracellular functions in the regulation of inflammation and wound healing. Acylated peptides that contain the first 26 amino acids of the mature protein can activate signaling via the formyl peptide receptors.</text>
</comment>
<comment type="miscellaneous">
    <text evidence="4">Was originally identified as calcium and phospholipid binding protein that displays Ca(2+)-dependent binding to phospholipid membranes and can promote membrane aggregation in vitro. Was initially identified as inhibitor of phospholipase A2 activity (in vitro). Inhibition of phospholipase activity is mediated via its phospholipid binding activity that limits the access of phospholipase to its substrates.</text>
</comment>
<comment type="similarity">
    <text evidence="7 8">Belongs to the annexin family.</text>
</comment>
<dbReference type="EMBL" id="S64951">
    <property type="protein sequence ID" value="AAB28036.2"/>
    <property type="molecule type" value="mRNA"/>
</dbReference>
<dbReference type="PIR" id="S36103">
    <property type="entry name" value="S36103"/>
</dbReference>
<dbReference type="SMR" id="Q92108"/>
<dbReference type="FunCoup" id="Q92108">
    <property type="interactions" value="1326"/>
</dbReference>
<dbReference type="STRING" id="9031.ENSGALP00000032184"/>
<dbReference type="PaxDb" id="9031-ENSGALP00000032184"/>
<dbReference type="VEuPathDB" id="HostDB:geneid_404271"/>
<dbReference type="eggNOG" id="KOG0819">
    <property type="taxonomic scope" value="Eukaryota"/>
</dbReference>
<dbReference type="InParanoid" id="Q92108"/>
<dbReference type="OrthoDB" id="37886at2759"/>
<dbReference type="Proteomes" id="UP000000539">
    <property type="component" value="Unassembled WGS sequence"/>
</dbReference>
<dbReference type="GO" id="GO:0016324">
    <property type="term" value="C:apical plasma membrane"/>
    <property type="evidence" value="ECO:0000250"/>
    <property type="project" value="UniProtKB"/>
</dbReference>
<dbReference type="GO" id="GO:0016323">
    <property type="term" value="C:basolateral plasma membrane"/>
    <property type="evidence" value="ECO:0007669"/>
    <property type="project" value="UniProtKB-SubCell"/>
</dbReference>
<dbReference type="GO" id="GO:0005737">
    <property type="term" value="C:cytoplasm"/>
    <property type="evidence" value="ECO:0000250"/>
    <property type="project" value="UniProtKB"/>
</dbReference>
<dbReference type="GO" id="GO:0031901">
    <property type="term" value="C:early endosome membrane"/>
    <property type="evidence" value="ECO:0000250"/>
    <property type="project" value="UniProtKB"/>
</dbReference>
<dbReference type="GO" id="GO:0070062">
    <property type="term" value="C:extracellular exosome"/>
    <property type="evidence" value="ECO:0000250"/>
    <property type="project" value="UniProtKB"/>
</dbReference>
<dbReference type="GO" id="GO:0005615">
    <property type="term" value="C:extracellular space"/>
    <property type="evidence" value="ECO:0000250"/>
    <property type="project" value="UniProtKB"/>
</dbReference>
<dbReference type="GO" id="GO:0016328">
    <property type="term" value="C:lateral plasma membrane"/>
    <property type="evidence" value="ECO:0000250"/>
    <property type="project" value="UniProtKB"/>
</dbReference>
<dbReference type="GO" id="GO:0031514">
    <property type="term" value="C:motile cilium"/>
    <property type="evidence" value="ECO:0000250"/>
    <property type="project" value="UniProtKB"/>
</dbReference>
<dbReference type="GO" id="GO:0005634">
    <property type="term" value="C:nucleus"/>
    <property type="evidence" value="ECO:0000250"/>
    <property type="project" value="UniProtKB"/>
</dbReference>
<dbReference type="GO" id="GO:0001891">
    <property type="term" value="C:phagocytic cup"/>
    <property type="evidence" value="ECO:0007669"/>
    <property type="project" value="UniProtKB-SubCell"/>
</dbReference>
<dbReference type="GO" id="GO:0005886">
    <property type="term" value="C:plasma membrane"/>
    <property type="evidence" value="ECO:0000250"/>
    <property type="project" value="UniProtKB"/>
</dbReference>
<dbReference type="GO" id="GO:0005509">
    <property type="term" value="F:calcium ion binding"/>
    <property type="evidence" value="ECO:0000250"/>
    <property type="project" value="UniProtKB"/>
</dbReference>
<dbReference type="GO" id="GO:0005544">
    <property type="term" value="F:calcium-dependent phospholipid binding"/>
    <property type="evidence" value="ECO:0000250"/>
    <property type="project" value="UniProtKB"/>
</dbReference>
<dbReference type="GO" id="GO:0019834">
    <property type="term" value="F:phospholipase A2 inhibitor activity"/>
    <property type="evidence" value="ECO:0007669"/>
    <property type="project" value="UniProtKB-KW"/>
</dbReference>
<dbReference type="GO" id="GO:0030036">
    <property type="term" value="P:actin cytoskeleton organization"/>
    <property type="evidence" value="ECO:0000250"/>
    <property type="project" value="UniProtKB"/>
</dbReference>
<dbReference type="GO" id="GO:0002250">
    <property type="term" value="P:adaptive immune response"/>
    <property type="evidence" value="ECO:0007669"/>
    <property type="project" value="UniProtKB-KW"/>
</dbReference>
<dbReference type="GO" id="GO:0071385">
    <property type="term" value="P:cellular response to glucocorticoid stimulus"/>
    <property type="evidence" value="ECO:0000250"/>
    <property type="project" value="UniProtKB"/>
</dbReference>
<dbReference type="GO" id="GO:0007187">
    <property type="term" value="P:G protein-coupled receptor signaling pathway, coupled to cyclic nucleotide second messenger"/>
    <property type="evidence" value="ECO:0000250"/>
    <property type="project" value="UniProtKB"/>
</dbReference>
<dbReference type="GO" id="GO:0071621">
    <property type="term" value="P:granulocyte chemotaxis"/>
    <property type="evidence" value="ECO:0000250"/>
    <property type="project" value="UniProtKB"/>
</dbReference>
<dbReference type="GO" id="GO:0006954">
    <property type="term" value="P:inflammatory response"/>
    <property type="evidence" value="ECO:0000250"/>
    <property type="project" value="UniProtKB"/>
</dbReference>
<dbReference type="GO" id="GO:0045087">
    <property type="term" value="P:innate immune response"/>
    <property type="evidence" value="ECO:0007669"/>
    <property type="project" value="UniProtKB-KW"/>
</dbReference>
<dbReference type="GO" id="GO:0002548">
    <property type="term" value="P:monocyte chemotaxis"/>
    <property type="evidence" value="ECO:0000250"/>
    <property type="project" value="UniProtKB"/>
</dbReference>
<dbReference type="GO" id="GO:0045920">
    <property type="term" value="P:negative regulation of exocytosis"/>
    <property type="evidence" value="ECO:0000250"/>
    <property type="project" value="UniProtKB"/>
</dbReference>
<dbReference type="GO" id="GO:0045629">
    <property type="term" value="P:negative regulation of T-helper 2 cell differentiation"/>
    <property type="evidence" value="ECO:0000250"/>
    <property type="project" value="UniProtKB"/>
</dbReference>
<dbReference type="GO" id="GO:0006909">
    <property type="term" value="P:phagocytosis"/>
    <property type="evidence" value="ECO:0000250"/>
    <property type="project" value="UniProtKB"/>
</dbReference>
<dbReference type="GO" id="GO:0032743">
    <property type="term" value="P:positive regulation of interleukin-2 production"/>
    <property type="evidence" value="ECO:0000250"/>
    <property type="project" value="UniProtKB"/>
</dbReference>
<dbReference type="GO" id="GO:0042102">
    <property type="term" value="P:positive regulation of T cell proliferation"/>
    <property type="evidence" value="ECO:0000250"/>
    <property type="project" value="UniProtKB"/>
</dbReference>
<dbReference type="GO" id="GO:0045627">
    <property type="term" value="P:positive regulation of T-helper 1 cell differentiation"/>
    <property type="evidence" value="ECO:0000250"/>
    <property type="project" value="UniProtKB"/>
</dbReference>
<dbReference type="GO" id="GO:0090303">
    <property type="term" value="P:positive regulation of wound healing"/>
    <property type="evidence" value="ECO:0000250"/>
    <property type="project" value="UniProtKB"/>
</dbReference>
<dbReference type="GO" id="GO:0008360">
    <property type="term" value="P:regulation of cell shape"/>
    <property type="evidence" value="ECO:0000250"/>
    <property type="project" value="UniProtKB"/>
</dbReference>
<dbReference type="GO" id="GO:0046883">
    <property type="term" value="P:regulation of hormone secretion"/>
    <property type="evidence" value="ECO:0000250"/>
    <property type="project" value="UniProtKB"/>
</dbReference>
<dbReference type="GO" id="GO:0050727">
    <property type="term" value="P:regulation of inflammatory response"/>
    <property type="evidence" value="ECO:0000250"/>
    <property type="project" value="UniProtKB"/>
</dbReference>
<dbReference type="GO" id="GO:0032652">
    <property type="term" value="P:regulation of interleukin-1 production"/>
    <property type="evidence" value="ECO:0000250"/>
    <property type="project" value="UniProtKB"/>
</dbReference>
<dbReference type="GO" id="GO:0002685">
    <property type="term" value="P:regulation of leukocyte migration"/>
    <property type="evidence" value="ECO:0000250"/>
    <property type="project" value="UniProtKB"/>
</dbReference>
<dbReference type="FunFam" id="1.10.220.10:FF:000007">
    <property type="entry name" value="Annexin"/>
    <property type="match status" value="1"/>
</dbReference>
<dbReference type="Gene3D" id="1.10.220.10">
    <property type="entry name" value="Annexin"/>
    <property type="match status" value="1"/>
</dbReference>
<dbReference type="InterPro" id="IPR001464">
    <property type="entry name" value="Annexin"/>
</dbReference>
<dbReference type="InterPro" id="IPR018502">
    <property type="entry name" value="Annexin_repeat"/>
</dbReference>
<dbReference type="InterPro" id="IPR018252">
    <property type="entry name" value="Annexin_repeat_CS"/>
</dbReference>
<dbReference type="InterPro" id="IPR037104">
    <property type="entry name" value="Annexin_sf"/>
</dbReference>
<dbReference type="InterPro" id="IPR002388">
    <property type="entry name" value="ANX1"/>
</dbReference>
<dbReference type="PANTHER" id="PTHR10502">
    <property type="entry name" value="ANNEXIN"/>
    <property type="match status" value="1"/>
</dbReference>
<dbReference type="PANTHER" id="PTHR10502:SF17">
    <property type="entry name" value="ANNEXIN A1"/>
    <property type="match status" value="1"/>
</dbReference>
<dbReference type="Pfam" id="PF00191">
    <property type="entry name" value="Annexin"/>
    <property type="match status" value="1"/>
</dbReference>
<dbReference type="PRINTS" id="PR00196">
    <property type="entry name" value="ANNEXIN"/>
</dbReference>
<dbReference type="PRINTS" id="PR00197">
    <property type="entry name" value="ANNEXINI"/>
</dbReference>
<dbReference type="SMART" id="SM00335">
    <property type="entry name" value="ANX"/>
    <property type="match status" value="1"/>
</dbReference>
<dbReference type="SUPFAM" id="SSF47874">
    <property type="entry name" value="Annexin"/>
    <property type="match status" value="1"/>
</dbReference>
<dbReference type="PROSITE" id="PS00223">
    <property type="entry name" value="ANNEXIN_1"/>
    <property type="match status" value="1"/>
</dbReference>
<dbReference type="PROSITE" id="PS51897">
    <property type="entry name" value="ANNEXIN_2"/>
    <property type="match status" value="2"/>
</dbReference>
<reference key="1">
    <citation type="journal article" date="1993" name="FEBS Lett.">
        <title>The hinge region of chicken annexin I contains no site for tyrosine phosphorylation.</title>
        <authorList>
            <person name="Sidis Y."/>
            <person name="Horseman N.D."/>
        </authorList>
    </citation>
    <scope>NUCLEOTIDE SEQUENCE [MRNA]</scope>
    <source>
        <tissue>Liver</tissue>
    </source>
</reference>
<accession>Q92108</accession>
<feature type="chain" id="PRO_0000067466" description="Annexin A1">
    <location>
        <begin position="1"/>
        <end position="130" status="greater than"/>
    </location>
</feature>
<feature type="repeat" description="Annexin 1" evidence="7">
    <location>
        <begin position="37"/>
        <end position="108"/>
    </location>
</feature>
<feature type="repeat" description="Annexin 2" evidence="7">
    <location>
        <begin position="109"/>
        <end position="130" status="greater than"/>
    </location>
</feature>
<feature type="binding site" evidence="5">
    <location>
        <position position="54"/>
    </location>
    <ligand>
        <name>Ca(2+)</name>
        <dbReference type="ChEBI" id="CHEBI:29108"/>
        <label>1</label>
    </ligand>
</feature>
<feature type="binding site" evidence="5">
    <location>
        <position position="55"/>
    </location>
    <ligand>
        <name>Ca(2+)</name>
        <dbReference type="ChEBI" id="CHEBI:29108"/>
        <label>1</label>
    </ligand>
</feature>
<feature type="binding site" evidence="5">
    <location>
        <position position="57"/>
    </location>
    <ligand>
        <name>Ca(2+)</name>
        <dbReference type="ChEBI" id="CHEBI:29108"/>
        <label>1</label>
    </ligand>
</feature>
<feature type="binding site" evidence="5">
    <location>
        <position position="92"/>
    </location>
    <ligand>
        <name>Ca(2+)</name>
        <dbReference type="ChEBI" id="CHEBI:29108"/>
        <label>2</label>
    </ligand>
</feature>
<feature type="binding site" evidence="5">
    <location>
        <position position="95"/>
    </location>
    <ligand>
        <name>Ca(2+)</name>
        <dbReference type="ChEBI" id="CHEBI:29108"/>
        <label>2</label>
    </ligand>
</feature>
<feature type="binding site" evidence="5">
    <location>
        <position position="100"/>
    </location>
    <ligand>
        <name>Ca(2+)</name>
        <dbReference type="ChEBI" id="CHEBI:29108"/>
        <label>2</label>
    </ligand>
</feature>
<feature type="binding site" evidence="5">
    <location>
        <position position="122"/>
    </location>
    <ligand>
        <name>Ca(2+)</name>
        <dbReference type="ChEBI" id="CHEBI:29108"/>
        <label>3</label>
    </ligand>
</feature>
<feature type="binding site" evidence="5">
    <location>
        <position position="124"/>
    </location>
    <ligand>
        <name>Ca(2+)</name>
        <dbReference type="ChEBI" id="CHEBI:29108"/>
        <label>3</label>
    </ligand>
</feature>
<feature type="binding site" evidence="5">
    <location>
        <position position="126"/>
    </location>
    <ligand>
        <name>Ca(2+)</name>
        <dbReference type="ChEBI" id="CHEBI:29108"/>
        <label>3</label>
    </ligand>
</feature>
<feature type="binding site" evidence="5">
    <location>
        <position position="127"/>
    </location>
    <ligand>
        <name>Ca(2+)</name>
        <dbReference type="ChEBI" id="CHEBI:29108"/>
        <label>4</label>
    </ligand>
</feature>
<feature type="binding site" evidence="5">
    <location>
        <position position="130"/>
    </location>
    <ligand>
        <name>Ca(2+)</name>
        <dbReference type="ChEBI" id="CHEBI:29108"/>
        <label>5</label>
    </ligand>
</feature>
<feature type="modified residue" description="Phosphoserine; by PKC" evidence="1">
    <location>
        <position position="24"/>
    </location>
</feature>
<feature type="cross-link" description="Isoglutamyl lysine isopeptide (Gln-Lys) (interchain with K-?)" evidence="1">
    <location>
        <position position="19"/>
    </location>
</feature>
<feature type="non-terminal residue">
    <location>
        <position position="130"/>
    </location>
</feature>
<organism>
    <name type="scientific">Gallus gallus</name>
    <name type="common">Chicken</name>
    <dbReference type="NCBI Taxonomy" id="9031"/>
    <lineage>
        <taxon>Eukaryota</taxon>
        <taxon>Metazoa</taxon>
        <taxon>Chordata</taxon>
        <taxon>Craniata</taxon>
        <taxon>Vertebrata</taxon>
        <taxon>Euteleostomi</taxon>
        <taxon>Archelosauria</taxon>
        <taxon>Archosauria</taxon>
        <taxon>Dinosauria</taxon>
        <taxon>Saurischia</taxon>
        <taxon>Theropoda</taxon>
        <taxon>Coelurosauria</taxon>
        <taxon>Aves</taxon>
        <taxon>Neognathae</taxon>
        <taxon>Galloanserae</taxon>
        <taxon>Galliformes</taxon>
        <taxon>Phasianidae</taxon>
        <taxon>Phasianinae</taxon>
        <taxon>Gallus</taxon>
    </lineage>
</organism>
<gene>
    <name type="primary">ANXA1</name>
    <name type="synonym">ANX1</name>
</gene>
<evidence type="ECO:0000250" key="1"/>
<evidence type="ECO:0000250" key="2">
    <source>
        <dbReference type="UniProtKB" id="P04083"/>
    </source>
</evidence>
<evidence type="ECO:0000250" key="3">
    <source>
        <dbReference type="UniProtKB" id="P07150"/>
    </source>
</evidence>
<evidence type="ECO:0000250" key="4">
    <source>
        <dbReference type="UniProtKB" id="P10107"/>
    </source>
</evidence>
<evidence type="ECO:0000250" key="5">
    <source>
        <dbReference type="UniProtKB" id="P19619"/>
    </source>
</evidence>
<evidence type="ECO:0000250" key="6">
    <source>
        <dbReference type="UniProtKB" id="P51662"/>
    </source>
</evidence>
<evidence type="ECO:0000255" key="7">
    <source>
        <dbReference type="PROSITE-ProRule" id="PRU01245"/>
    </source>
</evidence>
<evidence type="ECO:0000305" key="8"/>
<protein>
    <recommendedName>
        <fullName>Annexin A1</fullName>
    </recommendedName>
    <alternativeName>
        <fullName>Annexin I</fullName>
    </alternativeName>
    <alternativeName>
        <fullName>Annexin-1</fullName>
    </alternativeName>
    <alternativeName>
        <fullName>Calpactin II</fullName>
    </alternativeName>
    <alternativeName>
        <fullName>Calpactin-2</fullName>
    </alternativeName>
    <alternativeName>
        <fullName>Chromobindin-9</fullName>
    </alternativeName>
    <alternativeName>
        <fullName>Lipocortin I</fullName>
    </alternativeName>
    <alternativeName>
        <fullName>Phospholipase A2 inhibitory protein</fullName>
    </alternativeName>
    <alternativeName>
        <fullName>p35</fullName>
    </alternativeName>
</protein>
<name>ANXA1_CHICK</name>
<keyword id="KW-1064">Adaptive immunity</keyword>
<keyword id="KW-0041">Annexin</keyword>
<keyword id="KW-0106">Calcium</keyword>
<keyword id="KW-0111">Calcium/phospholipid-binding</keyword>
<keyword id="KW-1003">Cell membrane</keyword>
<keyword id="KW-0966">Cell projection</keyword>
<keyword id="KW-0969">Cilium</keyword>
<keyword id="KW-0963">Cytoplasm</keyword>
<keyword id="KW-0968">Cytoplasmic vesicle</keyword>
<keyword id="KW-0967">Endosome</keyword>
<keyword id="KW-0391">Immunity</keyword>
<keyword id="KW-0395">Inflammatory response</keyword>
<keyword id="KW-0399">Innate immunity</keyword>
<keyword id="KW-1017">Isopeptide bond</keyword>
<keyword id="KW-0472">Membrane</keyword>
<keyword id="KW-0479">Metal-binding</keyword>
<keyword id="KW-0539">Nucleus</keyword>
<keyword id="KW-0593">Phospholipase A2 inhibitor</keyword>
<keyword id="KW-0597">Phosphoprotein</keyword>
<keyword id="KW-1185">Reference proteome</keyword>
<keyword id="KW-0677">Repeat</keyword>
<keyword id="KW-0964">Secreted</keyword>
<proteinExistence type="evidence at transcript level"/>